<comment type="function">
    <text evidence="1">Acts as an alpha-ketoglutarate-dependent dioxygenase catalyzing hydroxylation of glutarate (GA) to L-2-hydroxyglutarate (L2HG). Functions in a L-lysine degradation pathway that proceeds via cadaverine, glutarate and L-2-hydroxyglutarate.</text>
</comment>
<comment type="catalytic activity">
    <reaction evidence="1">
        <text>glutarate + 2-oxoglutarate + O2 = (S)-2-hydroxyglutarate + succinate + CO2</text>
        <dbReference type="Rhea" id="RHEA:13821"/>
        <dbReference type="ChEBI" id="CHEBI:15379"/>
        <dbReference type="ChEBI" id="CHEBI:16526"/>
        <dbReference type="ChEBI" id="CHEBI:16782"/>
        <dbReference type="ChEBI" id="CHEBI:16810"/>
        <dbReference type="ChEBI" id="CHEBI:30031"/>
        <dbReference type="ChEBI" id="CHEBI:30921"/>
        <dbReference type="EC" id="1.14.11.64"/>
    </reaction>
    <physiologicalReaction direction="left-to-right" evidence="1">
        <dbReference type="Rhea" id="RHEA:13822"/>
    </physiologicalReaction>
</comment>
<comment type="cofactor">
    <cofactor evidence="1">
        <name>Fe(2+)</name>
        <dbReference type="ChEBI" id="CHEBI:29033"/>
    </cofactor>
    <text evidence="1">Binds 1 Fe(2+) ion per subunit.</text>
</comment>
<comment type="pathway">
    <text evidence="1">Amino-acid degradation.</text>
</comment>
<comment type="subunit">
    <text evidence="1">Homotetramer.</text>
</comment>
<comment type="similarity">
    <text evidence="1">Belongs to the glutarate hydroxylase family.</text>
</comment>
<comment type="sequence caution" evidence="2">
    <conflict type="erroneous initiation">
        <sequence resource="EMBL-CDS" id="AAL21674"/>
    </conflict>
    <text>Extended N-terminus.</text>
</comment>
<gene>
    <name evidence="1" type="primary">glaH</name>
    <name type="synonym">csiD</name>
    <name type="ordered locus">STM2789</name>
</gene>
<protein>
    <recommendedName>
        <fullName evidence="1">Glutarate 2-hydroxylase</fullName>
        <shortName evidence="1">G-2-H</shortName>
        <ecNumber evidence="1">1.14.11.64</ecNumber>
    </recommendedName>
</protein>
<sequence length="325" mass="37233">MNALTAVKANTDDLAQRHTGFTLAPSAQSPRLLALTFTADTTKQFLHQVAQWPVQALEYKSFLRFKIGKILDDLCGNQLQPLLIKTLLNRAQGALLISAEGIDDVAQAEEMVKLATAVAHLIGRSNYDAMSGQYYARFVVKNVDNSDSYLRQPHRVMELHNDGTYVEEVTDYVLMMKIDEQNMEGGNSLLLHLDDWEHLESFFTHPLARRVMRWAAPPSKNVSHDVWHPVFDVDQQGRPVMRYIDQFVQPKDFEEGVWLSELSDALETSQNILSVPVPVGKFLLINNLFWLHGRDRFTPHPDLRRELMRQRGYFAYAASHYQTHQ</sequence>
<feature type="chain" id="PRO_0000218182" description="Glutarate 2-hydroxylase">
    <location>
        <begin position="1"/>
        <end position="325"/>
    </location>
</feature>
<feature type="binding site" evidence="1">
    <location>
        <position position="160"/>
    </location>
    <ligand>
        <name>Fe cation</name>
        <dbReference type="ChEBI" id="CHEBI:24875"/>
    </ligand>
</feature>
<feature type="binding site" evidence="1">
    <location>
        <position position="162"/>
    </location>
    <ligand>
        <name>Fe cation</name>
        <dbReference type="ChEBI" id="CHEBI:24875"/>
    </ligand>
</feature>
<feature type="binding site" evidence="1">
    <location>
        <position position="292"/>
    </location>
    <ligand>
        <name>Fe cation</name>
        <dbReference type="ChEBI" id="CHEBI:24875"/>
    </ligand>
</feature>
<accession>P0CL02</accession>
<accession>Q9FA43</accession>
<dbReference type="EC" id="1.14.11.64" evidence="1"/>
<dbReference type="EMBL" id="AE006468">
    <property type="protein sequence ID" value="AAL21674.1"/>
    <property type="status" value="ALT_INIT"/>
    <property type="molecule type" value="Genomic_DNA"/>
</dbReference>
<dbReference type="RefSeq" id="NP_461715.3">
    <property type="nucleotide sequence ID" value="NC_003197.2"/>
</dbReference>
<dbReference type="RefSeq" id="WP_012664661.1">
    <property type="nucleotide sequence ID" value="NC_003197.2"/>
</dbReference>
<dbReference type="SMR" id="P0CL02"/>
<dbReference type="STRING" id="99287.STM2789"/>
<dbReference type="PaxDb" id="99287-STM2789"/>
<dbReference type="GeneID" id="1254312"/>
<dbReference type="KEGG" id="stm:STM2789"/>
<dbReference type="PATRIC" id="fig|99287.12.peg.2944"/>
<dbReference type="HOGENOM" id="CLU_075277_0_0_6"/>
<dbReference type="OMA" id="RREMRWT"/>
<dbReference type="PhylomeDB" id="P0CL02"/>
<dbReference type="Proteomes" id="UP000001014">
    <property type="component" value="Chromosome"/>
</dbReference>
<dbReference type="GO" id="GO:0008198">
    <property type="term" value="F:ferrous iron binding"/>
    <property type="evidence" value="ECO:0007669"/>
    <property type="project" value="UniProtKB-UniRule"/>
</dbReference>
<dbReference type="GO" id="GO:0106343">
    <property type="term" value="F:glutarate dioxygenase activity"/>
    <property type="evidence" value="ECO:0007669"/>
    <property type="project" value="UniProtKB-EC"/>
</dbReference>
<dbReference type="GO" id="GO:0050498">
    <property type="term" value="F:oxidoreductase activity, acting on paired donors, with incorporation or reduction of molecular oxygen, with 2-oxoglutarate as one donor, and the other dehydrogenated"/>
    <property type="evidence" value="ECO:0007669"/>
    <property type="project" value="UniProtKB-UniRule"/>
</dbReference>
<dbReference type="GO" id="GO:0019477">
    <property type="term" value="P:L-lysine catabolic process"/>
    <property type="evidence" value="ECO:0007669"/>
    <property type="project" value="UniProtKB-UniRule"/>
</dbReference>
<dbReference type="CDD" id="cd00250">
    <property type="entry name" value="CAS_like"/>
    <property type="match status" value="1"/>
</dbReference>
<dbReference type="FunFam" id="3.60.130.10:FF:000004">
    <property type="entry name" value="Glutarate 2-hydroxylase"/>
    <property type="match status" value="1"/>
</dbReference>
<dbReference type="Gene3D" id="3.60.130.10">
    <property type="entry name" value="Clavaminate synthase-like"/>
    <property type="match status" value="1"/>
</dbReference>
<dbReference type="HAMAP" id="MF_01083">
    <property type="entry name" value="glutarate_hydroxylase"/>
    <property type="match status" value="1"/>
</dbReference>
<dbReference type="InterPro" id="IPR015038">
    <property type="entry name" value="GlaH"/>
</dbReference>
<dbReference type="InterPro" id="IPR042098">
    <property type="entry name" value="TauD-like_sf"/>
</dbReference>
<dbReference type="NCBIfam" id="NF002814">
    <property type="entry name" value="PRK02963.1"/>
    <property type="match status" value="1"/>
</dbReference>
<dbReference type="Pfam" id="PF08943">
    <property type="entry name" value="CsiD"/>
    <property type="match status" value="1"/>
</dbReference>
<dbReference type="SUPFAM" id="SSF51197">
    <property type="entry name" value="Clavaminate synthase-like"/>
    <property type="match status" value="1"/>
</dbReference>
<name>GLAH_SALTY</name>
<evidence type="ECO:0000255" key="1">
    <source>
        <dbReference type="HAMAP-Rule" id="MF_01083"/>
    </source>
</evidence>
<evidence type="ECO:0000305" key="2"/>
<organism>
    <name type="scientific">Salmonella typhimurium (strain LT2 / SGSC1412 / ATCC 700720)</name>
    <dbReference type="NCBI Taxonomy" id="99287"/>
    <lineage>
        <taxon>Bacteria</taxon>
        <taxon>Pseudomonadati</taxon>
        <taxon>Pseudomonadota</taxon>
        <taxon>Gammaproteobacteria</taxon>
        <taxon>Enterobacterales</taxon>
        <taxon>Enterobacteriaceae</taxon>
        <taxon>Salmonella</taxon>
    </lineage>
</organism>
<keyword id="KW-0223">Dioxygenase</keyword>
<keyword id="KW-0408">Iron</keyword>
<keyword id="KW-0479">Metal-binding</keyword>
<keyword id="KW-0560">Oxidoreductase</keyword>
<keyword id="KW-1185">Reference proteome</keyword>
<reference key="1">
    <citation type="journal article" date="2001" name="Nature">
        <title>Complete genome sequence of Salmonella enterica serovar Typhimurium LT2.</title>
        <authorList>
            <person name="McClelland M."/>
            <person name="Sanderson K.E."/>
            <person name="Spieth J."/>
            <person name="Clifton S.W."/>
            <person name="Latreille P."/>
            <person name="Courtney L."/>
            <person name="Porwollik S."/>
            <person name="Ali J."/>
            <person name="Dante M."/>
            <person name="Du F."/>
            <person name="Hou S."/>
            <person name="Layman D."/>
            <person name="Leonard S."/>
            <person name="Nguyen C."/>
            <person name="Scott K."/>
            <person name="Holmes A."/>
            <person name="Grewal N."/>
            <person name="Mulvaney E."/>
            <person name="Ryan E."/>
            <person name="Sun H."/>
            <person name="Florea L."/>
            <person name="Miller W."/>
            <person name="Stoneking T."/>
            <person name="Nhan M."/>
            <person name="Waterston R."/>
            <person name="Wilson R.K."/>
        </authorList>
    </citation>
    <scope>NUCLEOTIDE SEQUENCE [LARGE SCALE GENOMIC DNA]</scope>
    <source>
        <strain>LT2 / SGSC1412 / ATCC 700720</strain>
    </source>
</reference>
<proteinExistence type="inferred from homology"/>